<proteinExistence type="evidence at protein level"/>
<reference key="1">
    <citation type="journal article" date="1994" name="Yeast">
        <title>Sequence of a 20.7 kb region of yeast chromosome XI includes the NUP100 gene, an open reading frame (ORF) possibly representing a nucleoside diphosphate kinase gene, tRNAs for His, Val and Trp in addition to seven ORFs with weak or no significant similarity to known proteins.</title>
        <authorList>
            <person name="Rasmussen S.W."/>
        </authorList>
    </citation>
    <scope>NUCLEOTIDE SEQUENCE [GENOMIC DNA]</scope>
    <source>
        <strain>ATCC 204508 / S288c</strain>
    </source>
</reference>
<reference key="2">
    <citation type="journal article" date="1994" name="Nature">
        <title>Complete DNA sequence of yeast chromosome XI.</title>
        <authorList>
            <person name="Dujon B."/>
            <person name="Alexandraki D."/>
            <person name="Andre B."/>
            <person name="Ansorge W."/>
            <person name="Baladron V."/>
            <person name="Ballesta J.P.G."/>
            <person name="Banrevi A."/>
            <person name="Bolle P.-A."/>
            <person name="Bolotin-Fukuhara M."/>
            <person name="Bossier P."/>
            <person name="Bou G."/>
            <person name="Boyer J."/>
            <person name="Buitrago M.J."/>
            <person name="Cheret G."/>
            <person name="Colleaux L."/>
            <person name="Daignan-Fornier B."/>
            <person name="del Rey F."/>
            <person name="Dion C."/>
            <person name="Domdey H."/>
            <person name="Duesterhoeft A."/>
            <person name="Duesterhus S."/>
            <person name="Entian K.-D."/>
            <person name="Erfle H."/>
            <person name="Esteban P.F."/>
            <person name="Feldmann H."/>
            <person name="Fernandes L."/>
            <person name="Fobo G.M."/>
            <person name="Fritz C."/>
            <person name="Fukuhara H."/>
            <person name="Gabel C."/>
            <person name="Gaillon L."/>
            <person name="Garcia-Cantalejo J.M."/>
            <person name="Garcia-Ramirez J.J."/>
            <person name="Gent M.E."/>
            <person name="Ghazvini M."/>
            <person name="Goffeau A."/>
            <person name="Gonzalez A."/>
            <person name="Grothues D."/>
            <person name="Guerreiro P."/>
            <person name="Hegemann J.H."/>
            <person name="Hewitt N."/>
            <person name="Hilger F."/>
            <person name="Hollenberg C.P."/>
            <person name="Horaitis O."/>
            <person name="Indge K.J."/>
            <person name="Jacquier A."/>
            <person name="James C.M."/>
            <person name="Jauniaux J.-C."/>
            <person name="Jimenez A."/>
            <person name="Keuchel H."/>
            <person name="Kirchrath L."/>
            <person name="Kleine K."/>
            <person name="Koetter P."/>
            <person name="Legrain P."/>
            <person name="Liebl S."/>
            <person name="Louis E.J."/>
            <person name="Maia e Silva A."/>
            <person name="Marck C."/>
            <person name="Monnier A.-L."/>
            <person name="Moestl D."/>
            <person name="Mueller S."/>
            <person name="Obermaier B."/>
            <person name="Oliver S.G."/>
            <person name="Pallier C."/>
            <person name="Pascolo S."/>
            <person name="Pfeiffer F."/>
            <person name="Philippsen P."/>
            <person name="Planta R.J."/>
            <person name="Pohl F.M."/>
            <person name="Pohl T.M."/>
            <person name="Poehlmann R."/>
            <person name="Portetelle D."/>
            <person name="Purnelle B."/>
            <person name="Puzos V."/>
            <person name="Ramezani Rad M."/>
            <person name="Rasmussen S.W."/>
            <person name="Remacha M.A."/>
            <person name="Revuelta J.L."/>
            <person name="Richard G.-F."/>
            <person name="Rieger M."/>
            <person name="Rodrigues-Pousada C."/>
            <person name="Rose M."/>
            <person name="Rupp T."/>
            <person name="Santos M.A."/>
            <person name="Schwager C."/>
            <person name="Sensen C."/>
            <person name="Skala J."/>
            <person name="Soares H."/>
            <person name="Sor F."/>
            <person name="Stegemann J."/>
            <person name="Tettelin H."/>
            <person name="Thierry A."/>
            <person name="Tzermia M."/>
            <person name="Urrestarazu L.A."/>
            <person name="van Dyck L."/>
            <person name="van Vliet-Reedijk J.C."/>
            <person name="Valens M."/>
            <person name="Vandenbol M."/>
            <person name="Vilela C."/>
            <person name="Vissers S."/>
            <person name="von Wettstein D."/>
            <person name="Voss H."/>
            <person name="Wiemann S."/>
            <person name="Xu G."/>
            <person name="Zimmermann J."/>
            <person name="Haasemann M."/>
            <person name="Becker I."/>
            <person name="Mewes H.-W."/>
        </authorList>
    </citation>
    <scope>NUCLEOTIDE SEQUENCE [LARGE SCALE GENOMIC DNA]</scope>
    <source>
        <strain>ATCC 204508 / S288c</strain>
    </source>
</reference>
<reference key="3">
    <citation type="journal article" date="2014" name="G3 (Bethesda)">
        <title>The reference genome sequence of Saccharomyces cerevisiae: Then and now.</title>
        <authorList>
            <person name="Engel S.R."/>
            <person name="Dietrich F.S."/>
            <person name="Fisk D.G."/>
            <person name="Binkley G."/>
            <person name="Balakrishnan R."/>
            <person name="Costanzo M.C."/>
            <person name="Dwight S.S."/>
            <person name="Hitz B.C."/>
            <person name="Karra K."/>
            <person name="Nash R.S."/>
            <person name="Weng S."/>
            <person name="Wong E.D."/>
            <person name="Lloyd P."/>
            <person name="Skrzypek M.S."/>
            <person name="Miyasato S.R."/>
            <person name="Simison M."/>
            <person name="Cherry J.M."/>
        </authorList>
    </citation>
    <scope>GENOME REANNOTATION</scope>
    <source>
        <strain>ATCC 204508 / S288c</strain>
    </source>
</reference>
<reference key="4">
    <citation type="journal article" date="2003" name="Nature">
        <title>Global analysis of protein localization in budding yeast.</title>
        <authorList>
            <person name="Huh W.-K."/>
            <person name="Falvo J.V."/>
            <person name="Gerke L.C."/>
            <person name="Carroll A.S."/>
            <person name="Howson R.W."/>
            <person name="Weissman J.S."/>
            <person name="O'Shea E.K."/>
        </authorList>
    </citation>
    <scope>SUBCELLULAR LOCATION [LARGE SCALE ANALYSIS]</scope>
</reference>
<reference key="5">
    <citation type="journal article" date="2003" name="Nature">
        <title>Global analysis of protein expression in yeast.</title>
        <authorList>
            <person name="Ghaemmaghami S."/>
            <person name="Huh W.-K."/>
            <person name="Bower K."/>
            <person name="Howson R.W."/>
            <person name="Belle A."/>
            <person name="Dephoure N."/>
            <person name="O'Shea E.K."/>
            <person name="Weissman J.S."/>
        </authorList>
    </citation>
    <scope>LEVEL OF PROTEIN EXPRESSION [LARGE SCALE ANALYSIS]</scope>
</reference>
<reference key="6">
    <citation type="journal article" date="2009" name="J. Biol. Chem.">
        <title>Functional analysis of free methionine-R-sulfoxide reductase from Saccharomyces cerevisiae.</title>
        <authorList>
            <person name="Le D.T."/>
            <person name="Lee B.C."/>
            <person name="Marino S.M."/>
            <person name="Zhang Y."/>
            <person name="Fomenko D.E."/>
            <person name="Kaya A."/>
            <person name="Hacioglu E."/>
            <person name="Kwak G.H."/>
            <person name="Koc A."/>
            <person name="Kim H.Y."/>
            <person name="Gladyshev V.N."/>
        </authorList>
    </citation>
    <scope>FUNCTION</scope>
    <scope>CATALYTIC ACTIVITY</scope>
    <scope>BIOPHYSICOCHEMICAL PROPERTIES</scope>
    <scope>DISRUPTION PHENOTYPE</scope>
    <scope>MUTAGENESIS OF CYS-91; CYS-101 AND CYS-125</scope>
</reference>
<reference key="7">
    <citation type="journal article" date="2000" name="EMBO J.">
        <title>Structure of the GAF domain, a ubiquitous signaling motif and a new class of cyclic GMP receptor.</title>
        <authorList>
            <person name="Ho Y.S."/>
            <person name="Burden L.M."/>
            <person name="Hurley J.H."/>
        </authorList>
    </citation>
    <scope>X-RAY CRYSTALLOGRAPHY (1.9 ANGSTROMS)</scope>
</reference>
<comment type="function">
    <text evidence="3">Catalyzes the reversible oxidation-reduction of the R-enantiomer of free methionine sulfoxide to methionine. Does not act on S-enantiomer of free methionine sulfoxide or R-enantiomer of dabsylated methionine sulfoxide. Involved in protection against oxidative stress.</text>
</comment>
<comment type="catalytic activity">
    <reaction evidence="3">
        <text>[thioredoxin]-disulfide + L-methionine + H2O = L-methionine (R)-S-oxide + [thioredoxin]-dithiol</text>
        <dbReference type="Rhea" id="RHEA:21260"/>
        <dbReference type="Rhea" id="RHEA-COMP:10698"/>
        <dbReference type="Rhea" id="RHEA-COMP:10700"/>
        <dbReference type="ChEBI" id="CHEBI:15377"/>
        <dbReference type="ChEBI" id="CHEBI:29950"/>
        <dbReference type="ChEBI" id="CHEBI:50058"/>
        <dbReference type="ChEBI" id="CHEBI:57844"/>
        <dbReference type="ChEBI" id="CHEBI:58773"/>
        <dbReference type="EC" id="1.8.4.14"/>
    </reaction>
</comment>
<comment type="biophysicochemical properties">
    <kinetics>
        <KM evidence="3">230 uM for free methionine-R-sulfoxide</KM>
        <Vmax evidence="3">443.0 nmol/min/mg enzyme</Vmax>
    </kinetics>
</comment>
<comment type="subcellular location">
    <subcellularLocation>
        <location evidence="1">Cytoplasm</location>
    </subcellularLocation>
    <subcellularLocation>
        <location evidence="1">Nucleus</location>
    </subcellularLocation>
</comment>
<comment type="disruption phenotype">
    <text evidence="3">Single deletion of fRMsr has complete growth inhibition on methionine-R-sulfoxide medium and fRMsr and MXR1 double deletion completely blocks the growth on both methionine-R-sulfoxide and methionine-S-sulfoxide medium. FRMsr and MXR2 double deletion has no effect on growth on methionine-S-sulfoxide medium. Single mutant or any of the double mutants show no growth defects in methionine medium, even the fRMsr, MXR1 and MXR2 triple deletion mutant is viable and grows similarly to wild-type. Single deletion of fRMsr has an increased sensitivity to oxidative stress and a decreased life span of 18% compared to wild-type. FRMsr and MXR1, as well as fRMsr and MXR2 double mutants, and fRMsr, MXR1 and MXR2 triple mutant show 20% reduction in life span compared with wild-type cells.</text>
</comment>
<comment type="miscellaneous">
    <text evidence="2">Present with 2610 molecules/cell in log phase SD medium.</text>
</comment>
<comment type="similarity">
    <text evidence="4">Belongs to the free Met sulfoxide reductase family.</text>
</comment>
<keyword id="KW-0002">3D-structure</keyword>
<keyword id="KW-0963">Cytoplasm</keyword>
<keyword id="KW-0539">Nucleus</keyword>
<keyword id="KW-0560">Oxidoreductase</keyword>
<keyword id="KW-1185">Reference proteome</keyword>
<keyword id="KW-0346">Stress response</keyword>
<dbReference type="EC" id="1.8.4.14"/>
<dbReference type="EMBL" id="X75780">
    <property type="protein sequence ID" value="CAA53405.1"/>
    <property type="molecule type" value="Genomic_DNA"/>
</dbReference>
<dbReference type="EMBL" id="Z28069">
    <property type="protein sequence ID" value="CAA81906.1"/>
    <property type="molecule type" value="Genomic_DNA"/>
</dbReference>
<dbReference type="EMBL" id="BK006944">
    <property type="protein sequence ID" value="DAA09087.1"/>
    <property type="molecule type" value="Genomic_DNA"/>
</dbReference>
<dbReference type="PIR" id="S37891">
    <property type="entry name" value="S37891"/>
</dbReference>
<dbReference type="PDB" id="1F5M">
    <property type="method" value="X-ray"/>
    <property type="resolution" value="1.90 A"/>
    <property type="chains" value="A/B=1-180"/>
</dbReference>
<dbReference type="PDB" id="3KO6">
    <property type="method" value="X-ray"/>
    <property type="resolution" value="2.55 A"/>
    <property type="chains" value="A/B=1-180"/>
</dbReference>
<dbReference type="PDBsum" id="1F5M"/>
<dbReference type="PDBsum" id="3KO6"/>
<dbReference type="SMR" id="P36088"/>
<dbReference type="BioGRID" id="34063">
    <property type="interactions" value="361"/>
</dbReference>
<dbReference type="DIP" id="DIP-4301N"/>
<dbReference type="FunCoup" id="P36088">
    <property type="interactions" value="109"/>
</dbReference>
<dbReference type="IntAct" id="P36088">
    <property type="interactions" value="4"/>
</dbReference>
<dbReference type="MINT" id="P36088"/>
<dbReference type="STRING" id="4932.YKL069W"/>
<dbReference type="iPTMnet" id="P36088"/>
<dbReference type="PaxDb" id="4932-YKL069W"/>
<dbReference type="PeptideAtlas" id="P36088"/>
<dbReference type="EnsemblFungi" id="YKL069W_mRNA">
    <property type="protein sequence ID" value="YKL069W"/>
    <property type="gene ID" value="YKL069W"/>
</dbReference>
<dbReference type="GeneID" id="853794"/>
<dbReference type="KEGG" id="sce:YKL069W"/>
<dbReference type="AGR" id="SGD:S000001552"/>
<dbReference type="SGD" id="S000001552">
    <property type="gene designation" value="YKL069W"/>
</dbReference>
<dbReference type="VEuPathDB" id="FungiDB:YKL069W"/>
<dbReference type="eggNOG" id="ENOG502RXXR">
    <property type="taxonomic scope" value="Eukaryota"/>
</dbReference>
<dbReference type="GeneTree" id="ENSGT00390000006659"/>
<dbReference type="HOGENOM" id="CLU_077738_1_1_1"/>
<dbReference type="InParanoid" id="P36088"/>
<dbReference type="OMA" id="FQGPIAC"/>
<dbReference type="OrthoDB" id="15735at2759"/>
<dbReference type="BioCyc" id="YEAST:G3O-31865-MONOMER"/>
<dbReference type="SABIO-RK" id="P36088"/>
<dbReference type="BioGRID-ORCS" id="853794">
    <property type="hits" value="0 hits in 10 CRISPR screens"/>
</dbReference>
<dbReference type="EvolutionaryTrace" id="P36088"/>
<dbReference type="PRO" id="PR:P36088"/>
<dbReference type="Proteomes" id="UP000002311">
    <property type="component" value="Chromosome XI"/>
</dbReference>
<dbReference type="RNAct" id="P36088">
    <property type="molecule type" value="protein"/>
</dbReference>
<dbReference type="GO" id="GO:0005737">
    <property type="term" value="C:cytoplasm"/>
    <property type="evidence" value="ECO:0007005"/>
    <property type="project" value="SGD"/>
</dbReference>
<dbReference type="GO" id="GO:0005829">
    <property type="term" value="C:cytosol"/>
    <property type="evidence" value="ECO:0007005"/>
    <property type="project" value="SGD"/>
</dbReference>
<dbReference type="GO" id="GO:0005634">
    <property type="term" value="C:nucleus"/>
    <property type="evidence" value="ECO:0007005"/>
    <property type="project" value="SGD"/>
</dbReference>
<dbReference type="GO" id="GO:0033745">
    <property type="term" value="F:L-methionine-(R)-S-oxide reductase activity"/>
    <property type="evidence" value="ECO:0000314"/>
    <property type="project" value="SGD"/>
</dbReference>
<dbReference type="GO" id="GO:0034599">
    <property type="term" value="P:cellular response to oxidative stress"/>
    <property type="evidence" value="ECO:0000315"/>
    <property type="project" value="SGD"/>
</dbReference>
<dbReference type="FunFam" id="3.30.450.40:FF:000048">
    <property type="entry name" value="Free methionine-R-sulfoxide reductase"/>
    <property type="match status" value="1"/>
</dbReference>
<dbReference type="Gene3D" id="3.30.450.40">
    <property type="match status" value="1"/>
</dbReference>
<dbReference type="InterPro" id="IPR000614">
    <property type="entry name" value="FRMsr_CS"/>
</dbReference>
<dbReference type="InterPro" id="IPR003018">
    <property type="entry name" value="GAF"/>
</dbReference>
<dbReference type="InterPro" id="IPR029016">
    <property type="entry name" value="GAF-like_dom_sf"/>
</dbReference>
<dbReference type="InterPro" id="IPR051330">
    <property type="entry name" value="Phosphatase_reg/MetRdx"/>
</dbReference>
<dbReference type="PANTHER" id="PTHR21021:SF15">
    <property type="entry name" value="FREE METHIONINE-R-SULFOXIDE REDUCTASE"/>
    <property type="match status" value="1"/>
</dbReference>
<dbReference type="PANTHER" id="PTHR21021">
    <property type="entry name" value="GAF/PUTATIVE CYTOSKELETAL PROTEIN"/>
    <property type="match status" value="1"/>
</dbReference>
<dbReference type="Pfam" id="PF01590">
    <property type="entry name" value="GAF"/>
    <property type="match status" value="1"/>
</dbReference>
<dbReference type="SUPFAM" id="SSF55781">
    <property type="entry name" value="GAF domain-like"/>
    <property type="match status" value="1"/>
</dbReference>
<dbReference type="PROSITE" id="PS01320">
    <property type="entry name" value="UPF0067"/>
    <property type="match status" value="1"/>
</dbReference>
<name>FRMSR_YEAST</name>
<evidence type="ECO:0000269" key="1">
    <source>
    </source>
</evidence>
<evidence type="ECO:0000269" key="2">
    <source>
    </source>
</evidence>
<evidence type="ECO:0000269" key="3">
    <source>
    </source>
</evidence>
<evidence type="ECO:0000305" key="4"/>
<evidence type="ECO:0007829" key="5">
    <source>
        <dbReference type="PDB" id="1F5M"/>
    </source>
</evidence>
<gene>
    <name type="ordered locus">YKL069W</name>
    <name type="ORF">YKL340</name>
</gene>
<sequence length="180" mass="19734">MGSSTGFHHADHVNYSSNLNKEEILEQLLLSYEGLSDGQVNWVCNLSNASSLIWHAYKSLAVDINWAGFYVTQASEENTLILGPFQGKVACQMIQFGKGVCGTAASTKETQIVPDVNKYPGHIACDGETKSEIVVPIISNDGKTLGVIDIDCLDYEGFDHVDKEFLEKLAKLINKSCVFK</sequence>
<accession>P36088</accession>
<accession>D6VXL7</accession>
<feature type="chain" id="PRO_0000171552" description="Free methionine-R-sulfoxide reductase">
    <location>
        <begin position="1"/>
        <end position="180"/>
    </location>
</feature>
<feature type="domain" description="GAF">
    <location>
        <begin position="99"/>
        <end position="177"/>
    </location>
</feature>
<feature type="mutagenesis site" description="Dramatic reduction in enzyme activity." evidence="3">
    <original>C</original>
    <variation>S</variation>
    <location>
        <position position="91"/>
    </location>
</feature>
<feature type="mutagenesis site" description="Dramatic reduction in enzyme activity." evidence="3">
    <original>C</original>
    <variation>S</variation>
    <location>
        <position position="101"/>
    </location>
</feature>
<feature type="mutagenesis site" description="Dramatic reduction in enzyme activity." evidence="3">
    <original>C</original>
    <variation>S</variation>
    <location>
        <position position="125"/>
    </location>
</feature>
<feature type="helix" evidence="5">
    <location>
        <begin position="9"/>
        <end position="13"/>
    </location>
</feature>
<feature type="helix" evidence="5">
    <location>
        <begin position="21"/>
        <end position="36"/>
    </location>
</feature>
<feature type="helix" evidence="5">
    <location>
        <begin position="42"/>
        <end position="59"/>
    </location>
</feature>
<feature type="strand" evidence="5">
    <location>
        <begin position="64"/>
        <end position="72"/>
    </location>
</feature>
<feature type="strand" evidence="5">
    <location>
        <begin position="74"/>
        <end position="77"/>
    </location>
</feature>
<feature type="strand" evidence="5">
    <location>
        <begin position="79"/>
        <end position="88"/>
    </location>
</feature>
<feature type="strand" evidence="5">
    <location>
        <begin position="92"/>
        <end position="95"/>
    </location>
</feature>
<feature type="helix" evidence="5">
    <location>
        <begin position="99"/>
        <end position="107"/>
    </location>
</feature>
<feature type="strand" evidence="5">
    <location>
        <begin position="111"/>
        <end position="114"/>
    </location>
</feature>
<feature type="helix" evidence="5">
    <location>
        <begin position="116"/>
        <end position="118"/>
    </location>
</feature>
<feature type="strand" evidence="5">
    <location>
        <begin position="131"/>
        <end position="138"/>
    </location>
</feature>
<feature type="strand" evidence="5">
    <location>
        <begin position="144"/>
        <end position="154"/>
    </location>
</feature>
<feature type="helix" evidence="5">
    <location>
        <begin position="160"/>
        <end position="176"/>
    </location>
</feature>
<protein>
    <recommendedName>
        <fullName>Free methionine-R-sulfoxide reductase</fullName>
        <shortName>fRMsr</shortName>
        <ecNumber>1.8.4.14</ecNumber>
    </recommendedName>
    <alternativeName>
        <fullName>GAF domain-containing protein YKL069W</fullName>
    </alternativeName>
</protein>
<organism>
    <name type="scientific">Saccharomyces cerevisiae (strain ATCC 204508 / S288c)</name>
    <name type="common">Baker's yeast</name>
    <dbReference type="NCBI Taxonomy" id="559292"/>
    <lineage>
        <taxon>Eukaryota</taxon>
        <taxon>Fungi</taxon>
        <taxon>Dikarya</taxon>
        <taxon>Ascomycota</taxon>
        <taxon>Saccharomycotina</taxon>
        <taxon>Saccharomycetes</taxon>
        <taxon>Saccharomycetales</taxon>
        <taxon>Saccharomycetaceae</taxon>
        <taxon>Saccharomyces</taxon>
    </lineage>
</organism>